<gene>
    <name type="primary">uaf-1</name>
    <name type="ORF">CBG15152</name>
</gene>
<name>U2AF2_CAEBR</name>
<sequence>MVEQAQGSLEEIERQFLDVAQRDGLESLQEDVKPDVKSDLNGNGEEKRDRDDEDRKKRKRSRSRDRGDRDRKRSRSRDRRDRDRSRSRERRRDRSRDRNRDDRRGGRDDDRRREPQEPAKPREPKKYRFWDVPPTGFENITPMEYKNMQASGAVPRGSVQSAVPVVGPSVTCQSRRLYVGNIPFGCNEEAMLDFFNQQMHLCNLAQAPGNPILLCQINLDKNFAFIEFRSIDETTAGMAFDGINFMGQQLKVRRPRDYQPSQNTFDMNARMPVSSIVVDSANKIFIGGLPNYLTEDQVKELLCSFGPLKAFSLNVDSQGNSKGYAFAEYLDPTLTDQAIAGLNGMQLGDKQLVVQLACANQTRHNTHLPNSASAIAGIDLSQGAGRATEILCLMNMVTEDELRSDEDYEEILEDVREECSKYGIVRSLEIPRPYDDHPVPGVGKVFVEFATTSDCQRAQAALTGRKFANRTVVTSYYDVDKYHNRQFN</sequence>
<reference key="1">
    <citation type="journal article" date="1997" name="Mol. Cell. Biol.">
        <title>Cloning of Caenorhabditis U2AF65: an alternatively spliced RNA containing a novel exon.</title>
        <authorList>
            <person name="Zorio D.A.R."/>
            <person name="Lea K."/>
            <person name="Blumenthal T."/>
        </authorList>
    </citation>
    <scope>NUCLEOTIDE SEQUENCE [GENOMIC DNA]</scope>
</reference>
<reference key="2">
    <citation type="journal article" date="2003" name="PLoS Biol.">
        <title>The genome sequence of Caenorhabditis briggsae: a platform for comparative genomics.</title>
        <authorList>
            <person name="Stein L.D."/>
            <person name="Bao Z."/>
            <person name="Blasiar D."/>
            <person name="Blumenthal T."/>
            <person name="Brent M.R."/>
            <person name="Chen N."/>
            <person name="Chinwalla A."/>
            <person name="Clarke L."/>
            <person name="Clee C."/>
            <person name="Coghlan A."/>
            <person name="Coulson A."/>
            <person name="D'Eustachio P."/>
            <person name="Fitch D.H.A."/>
            <person name="Fulton L.A."/>
            <person name="Fulton R.E."/>
            <person name="Griffiths-Jones S."/>
            <person name="Harris T.W."/>
            <person name="Hillier L.W."/>
            <person name="Kamath R."/>
            <person name="Kuwabara P.E."/>
            <person name="Mardis E.R."/>
            <person name="Marra M.A."/>
            <person name="Miner T.L."/>
            <person name="Minx P."/>
            <person name="Mullikin J.C."/>
            <person name="Plumb R.W."/>
            <person name="Rogers J."/>
            <person name="Schein J.E."/>
            <person name="Sohrmann M."/>
            <person name="Spieth J."/>
            <person name="Stajich J.E."/>
            <person name="Wei C."/>
            <person name="Willey D."/>
            <person name="Wilson R.K."/>
            <person name="Durbin R.M."/>
            <person name="Waterston R.H."/>
        </authorList>
    </citation>
    <scope>NUCLEOTIDE SEQUENCE [LARGE SCALE GENOMIC DNA]</scope>
    <source>
        <strain>AF16</strain>
    </source>
</reference>
<proteinExistence type="inferred from homology"/>
<comment type="function">
    <text evidence="1">Necessary for the splicing of pre-mRNA. Binds to the polypyrimidine tract of introns early during spliceosome assembly (By similarity).</text>
</comment>
<comment type="subunit">
    <text evidence="1">Forms a heterodimer with the U2AF small subunit.</text>
</comment>
<comment type="subcellular location">
    <subcellularLocation>
        <location>Nucleus</location>
    </subcellularLocation>
</comment>
<comment type="similarity">
    <text evidence="4">Belongs to the splicing factor SR family.</text>
</comment>
<accession>P90727</accession>
<accession>A8XLT8</accession>
<accession>Q616T0</accession>
<organism>
    <name type="scientific">Caenorhabditis briggsae</name>
    <dbReference type="NCBI Taxonomy" id="6238"/>
    <lineage>
        <taxon>Eukaryota</taxon>
        <taxon>Metazoa</taxon>
        <taxon>Ecdysozoa</taxon>
        <taxon>Nematoda</taxon>
        <taxon>Chromadorea</taxon>
        <taxon>Rhabditida</taxon>
        <taxon>Rhabditina</taxon>
        <taxon>Rhabditomorpha</taxon>
        <taxon>Rhabditoidea</taxon>
        <taxon>Rhabditidae</taxon>
        <taxon>Peloderinae</taxon>
        <taxon>Caenorhabditis</taxon>
    </lineage>
</organism>
<evidence type="ECO:0000250" key="1"/>
<evidence type="ECO:0000255" key="2">
    <source>
        <dbReference type="PROSITE-ProRule" id="PRU00176"/>
    </source>
</evidence>
<evidence type="ECO:0000256" key="3">
    <source>
        <dbReference type="SAM" id="MobiDB-lite"/>
    </source>
</evidence>
<evidence type="ECO:0000305" key="4"/>
<keyword id="KW-0507">mRNA processing</keyword>
<keyword id="KW-0508">mRNA splicing</keyword>
<keyword id="KW-0539">Nucleus</keyword>
<keyword id="KW-1185">Reference proteome</keyword>
<keyword id="KW-0677">Repeat</keyword>
<keyword id="KW-0694">RNA-binding</keyword>
<dbReference type="EMBL" id="U79145">
    <property type="protein sequence ID" value="AAB38280.1"/>
    <property type="molecule type" value="Genomic_DNA"/>
</dbReference>
<dbReference type="EMBL" id="HE601055">
    <property type="protein sequence ID" value="CAP33592.1"/>
    <property type="molecule type" value="Genomic_DNA"/>
</dbReference>
<dbReference type="SMR" id="P90727"/>
<dbReference type="FunCoup" id="P90727">
    <property type="interactions" value="2543"/>
</dbReference>
<dbReference type="STRING" id="6238.P90727"/>
<dbReference type="EnsemblMetazoa" id="CBG15152a.1">
    <property type="protein sequence ID" value="CBG15152a.1"/>
    <property type="gene ID" value="WBGene00035480"/>
</dbReference>
<dbReference type="KEGG" id="cbr:CBG_15152"/>
<dbReference type="CTD" id="8584875"/>
<dbReference type="WormBase" id="CBG15152a">
    <property type="protein sequence ID" value="CBP18334"/>
    <property type="gene ID" value="WBGene00035480"/>
    <property type="gene designation" value="Cbr-uaf-1"/>
</dbReference>
<dbReference type="eggNOG" id="KOG0120">
    <property type="taxonomic scope" value="Eukaryota"/>
</dbReference>
<dbReference type="HOGENOM" id="CLU_021795_4_2_1"/>
<dbReference type="InParanoid" id="P90727"/>
<dbReference type="OMA" id="MTQWDIK"/>
<dbReference type="Proteomes" id="UP000008549">
    <property type="component" value="Unassembled WGS sequence"/>
</dbReference>
<dbReference type="GO" id="GO:0000243">
    <property type="term" value="C:commitment complex"/>
    <property type="evidence" value="ECO:0000318"/>
    <property type="project" value="GO_Central"/>
</dbReference>
<dbReference type="GO" id="GO:0016607">
    <property type="term" value="C:nuclear speck"/>
    <property type="evidence" value="ECO:0000318"/>
    <property type="project" value="GO_Central"/>
</dbReference>
<dbReference type="GO" id="GO:0071004">
    <property type="term" value="C:U2-type prespliceosome"/>
    <property type="evidence" value="ECO:0000318"/>
    <property type="project" value="GO_Central"/>
</dbReference>
<dbReference type="GO" id="GO:0089701">
    <property type="term" value="C:U2AF complex"/>
    <property type="evidence" value="ECO:0000318"/>
    <property type="project" value="GO_Central"/>
</dbReference>
<dbReference type="GO" id="GO:0008187">
    <property type="term" value="F:poly-pyrimidine tract binding"/>
    <property type="evidence" value="ECO:0000318"/>
    <property type="project" value="GO_Central"/>
</dbReference>
<dbReference type="GO" id="GO:0030628">
    <property type="term" value="F:pre-mRNA 3'-splice site binding"/>
    <property type="evidence" value="ECO:0000318"/>
    <property type="project" value="GO_Central"/>
</dbReference>
<dbReference type="GO" id="GO:0048589">
    <property type="term" value="P:developmental growth"/>
    <property type="evidence" value="ECO:0007669"/>
    <property type="project" value="EnsemblMetazoa"/>
</dbReference>
<dbReference type="GO" id="GO:0009792">
    <property type="term" value="P:embryo development ending in birth or egg hatching"/>
    <property type="evidence" value="ECO:0007669"/>
    <property type="project" value="EnsemblMetazoa"/>
</dbReference>
<dbReference type="GO" id="GO:0010172">
    <property type="term" value="P:embryonic body morphogenesis"/>
    <property type="evidence" value="ECO:0007669"/>
    <property type="project" value="EnsemblMetazoa"/>
</dbReference>
<dbReference type="GO" id="GO:0007281">
    <property type="term" value="P:germ cell development"/>
    <property type="evidence" value="ECO:0007669"/>
    <property type="project" value="EnsemblMetazoa"/>
</dbReference>
<dbReference type="GO" id="GO:0000389">
    <property type="term" value="P:mRNA 3'-splice site recognition"/>
    <property type="evidence" value="ECO:0007669"/>
    <property type="project" value="EnsemblMetazoa"/>
</dbReference>
<dbReference type="GO" id="GO:0002119">
    <property type="term" value="P:nematode larval development"/>
    <property type="evidence" value="ECO:0007669"/>
    <property type="project" value="EnsemblMetazoa"/>
</dbReference>
<dbReference type="GO" id="GO:0000245">
    <property type="term" value="P:spliceosomal complex assembly"/>
    <property type="evidence" value="ECO:0000318"/>
    <property type="project" value="GO_Central"/>
</dbReference>
<dbReference type="CDD" id="cd12230">
    <property type="entry name" value="RRM1_U2AF65"/>
    <property type="match status" value="1"/>
</dbReference>
<dbReference type="CDD" id="cd12231">
    <property type="entry name" value="RRM2_U2AF65"/>
    <property type="match status" value="1"/>
</dbReference>
<dbReference type="CDD" id="cd12232">
    <property type="entry name" value="RRM3_U2AF65"/>
    <property type="match status" value="1"/>
</dbReference>
<dbReference type="FunFam" id="3.30.70.330:FF:000074">
    <property type="entry name" value="U2 snRNP auxiliary factor large subunit"/>
    <property type="match status" value="1"/>
</dbReference>
<dbReference type="FunFam" id="3.30.70.330:FF:000097">
    <property type="entry name" value="U2 snRNP auxiliary factor large subunit"/>
    <property type="match status" value="1"/>
</dbReference>
<dbReference type="Gene3D" id="3.30.70.330">
    <property type="match status" value="3"/>
</dbReference>
<dbReference type="InterPro" id="IPR012677">
    <property type="entry name" value="Nucleotide-bd_a/b_plait_sf"/>
</dbReference>
<dbReference type="InterPro" id="IPR035979">
    <property type="entry name" value="RBD_domain_sf"/>
</dbReference>
<dbReference type="InterPro" id="IPR000504">
    <property type="entry name" value="RRM_dom"/>
</dbReference>
<dbReference type="InterPro" id="IPR006529">
    <property type="entry name" value="U2AF_lg"/>
</dbReference>
<dbReference type="NCBIfam" id="TIGR01642">
    <property type="entry name" value="U2AF_lg"/>
    <property type="match status" value="1"/>
</dbReference>
<dbReference type="PANTHER" id="PTHR23139">
    <property type="entry name" value="RNA-BINDING PROTEIN"/>
    <property type="match status" value="1"/>
</dbReference>
<dbReference type="Pfam" id="PF00076">
    <property type="entry name" value="RRM_1"/>
    <property type="match status" value="3"/>
</dbReference>
<dbReference type="SMART" id="SM00360">
    <property type="entry name" value="RRM"/>
    <property type="match status" value="3"/>
</dbReference>
<dbReference type="SUPFAM" id="SSF54928">
    <property type="entry name" value="RNA-binding domain, RBD"/>
    <property type="match status" value="2"/>
</dbReference>
<dbReference type="PROSITE" id="PS50102">
    <property type="entry name" value="RRM"/>
    <property type="match status" value="3"/>
</dbReference>
<protein>
    <recommendedName>
        <fullName>Splicing factor U2AF 65 kDa subunit</fullName>
    </recommendedName>
    <alternativeName>
        <fullName>U2 auxiliary factor 65 kDa subunit</fullName>
        <shortName>U2AF65</shortName>
    </alternativeName>
    <alternativeName>
        <fullName>U2 snRNP auxiliary factor large subunit</fullName>
    </alternativeName>
</protein>
<feature type="chain" id="PRO_0000081990" description="Splicing factor U2AF 65 kDa subunit">
    <location>
        <begin position="1"/>
        <end position="488"/>
    </location>
</feature>
<feature type="domain" description="RRM 1" evidence="2">
    <location>
        <begin position="175"/>
        <end position="257"/>
    </location>
</feature>
<feature type="domain" description="RRM 2" evidence="2">
    <location>
        <begin position="282"/>
        <end position="359"/>
    </location>
</feature>
<feature type="domain" description="RRM 3" evidence="2">
    <location>
        <begin position="389"/>
        <end position="479"/>
    </location>
</feature>
<feature type="region of interest" description="Disordered" evidence="3">
    <location>
        <begin position="25"/>
        <end position="133"/>
    </location>
</feature>
<feature type="compositionally biased region" description="Basic and acidic residues" evidence="3">
    <location>
        <begin position="25"/>
        <end position="55"/>
    </location>
</feature>
<feature type="compositionally biased region" description="Basic and acidic residues" evidence="3">
    <location>
        <begin position="78"/>
        <end position="129"/>
    </location>
</feature>
<feature type="sequence conflict" description="In Ref. 1; AAB38280." evidence="4" ref="1">
    <original>A</original>
    <variation>S</variation>
    <location>
        <position position="5"/>
    </location>
</feature>